<sequence length="348" mass="35663">MTSGKNGITYAEAGVDIDAGNALVDRIKPAAKRTNRPGVASGLGGFGALFDLKAAGYQDPVLVAATDGVGTKLRIAIDTGLVDGVGIDLVAMCVNDLVCQGAEPLFFLDYFATGKLETDTAARIIEGIAEGCVQSGCALIGGETAEMPGMYPAGDFDLAGFAVGAMERGTALPEGVVEGDVLLGLASNGVHSNGYSLVRKLVEISGNTWESDCPFGDGKLGQALLTPTRLYVRQVLAAIRAGGVHALAHITGGGLTENLPRVLPEGMGATIDLDTWDLPPVFGWMAETGGIAEAEMLKTFNCGIGMIVVCAADRAEALAELLSAEGETVARIGTVTTTPGIAYTGKLL</sequence>
<name>PUR5_RUEPO</name>
<keyword id="KW-0067">ATP-binding</keyword>
<keyword id="KW-0963">Cytoplasm</keyword>
<keyword id="KW-0436">Ligase</keyword>
<keyword id="KW-0547">Nucleotide-binding</keyword>
<keyword id="KW-0658">Purine biosynthesis</keyword>
<keyword id="KW-1185">Reference proteome</keyword>
<protein>
    <recommendedName>
        <fullName evidence="1">Phosphoribosylformylglycinamidine cyclo-ligase</fullName>
        <ecNumber evidence="1">6.3.3.1</ecNumber>
    </recommendedName>
    <alternativeName>
        <fullName evidence="1">AIR synthase</fullName>
    </alternativeName>
    <alternativeName>
        <fullName evidence="1">AIRS</fullName>
    </alternativeName>
    <alternativeName>
        <fullName evidence="1">Phosphoribosyl-aminoimidazole synthetase</fullName>
    </alternativeName>
</protein>
<organism>
    <name type="scientific">Ruegeria pomeroyi (strain ATCC 700808 / DSM 15171 / DSS-3)</name>
    <name type="common">Silicibacter pomeroyi</name>
    <dbReference type="NCBI Taxonomy" id="246200"/>
    <lineage>
        <taxon>Bacteria</taxon>
        <taxon>Pseudomonadati</taxon>
        <taxon>Pseudomonadota</taxon>
        <taxon>Alphaproteobacteria</taxon>
        <taxon>Rhodobacterales</taxon>
        <taxon>Roseobacteraceae</taxon>
        <taxon>Ruegeria</taxon>
    </lineage>
</organism>
<accession>Q5LRF9</accession>
<evidence type="ECO:0000255" key="1">
    <source>
        <dbReference type="HAMAP-Rule" id="MF_00741"/>
    </source>
</evidence>
<feature type="chain" id="PRO_0000258405" description="Phosphoribosylformylglycinamidine cyclo-ligase">
    <location>
        <begin position="1"/>
        <end position="348"/>
    </location>
</feature>
<comment type="catalytic activity">
    <reaction evidence="1">
        <text>2-formamido-N(1)-(5-O-phospho-beta-D-ribosyl)acetamidine + ATP = 5-amino-1-(5-phospho-beta-D-ribosyl)imidazole + ADP + phosphate + H(+)</text>
        <dbReference type="Rhea" id="RHEA:23032"/>
        <dbReference type="ChEBI" id="CHEBI:15378"/>
        <dbReference type="ChEBI" id="CHEBI:30616"/>
        <dbReference type="ChEBI" id="CHEBI:43474"/>
        <dbReference type="ChEBI" id="CHEBI:137981"/>
        <dbReference type="ChEBI" id="CHEBI:147287"/>
        <dbReference type="ChEBI" id="CHEBI:456216"/>
        <dbReference type="EC" id="6.3.3.1"/>
    </reaction>
</comment>
<comment type="pathway">
    <text evidence="1">Purine metabolism; IMP biosynthesis via de novo pathway; 5-amino-1-(5-phospho-D-ribosyl)imidazole from N(2)-formyl-N(1)-(5-phospho-D-ribosyl)glycinamide: step 2/2.</text>
</comment>
<comment type="subcellular location">
    <subcellularLocation>
        <location evidence="1">Cytoplasm</location>
    </subcellularLocation>
</comment>
<comment type="similarity">
    <text evidence="1">Belongs to the AIR synthase family.</text>
</comment>
<proteinExistence type="inferred from homology"/>
<gene>
    <name evidence="1" type="primary">purM</name>
    <name type="ordered locus">SPO2169</name>
</gene>
<reference key="1">
    <citation type="journal article" date="2004" name="Nature">
        <title>Genome sequence of Silicibacter pomeroyi reveals adaptations to the marine environment.</title>
        <authorList>
            <person name="Moran M.A."/>
            <person name="Buchan A."/>
            <person name="Gonzalez J.M."/>
            <person name="Heidelberg J.F."/>
            <person name="Whitman W.B."/>
            <person name="Kiene R.P."/>
            <person name="Henriksen J.R."/>
            <person name="King G.M."/>
            <person name="Belas R."/>
            <person name="Fuqua C."/>
            <person name="Brinkac L.M."/>
            <person name="Lewis M."/>
            <person name="Johri S."/>
            <person name="Weaver B."/>
            <person name="Pai G."/>
            <person name="Eisen J.A."/>
            <person name="Rahe E."/>
            <person name="Sheldon W.M."/>
            <person name="Ye W."/>
            <person name="Miller T.R."/>
            <person name="Carlton J."/>
            <person name="Rasko D.A."/>
            <person name="Paulsen I.T."/>
            <person name="Ren Q."/>
            <person name="Daugherty S.C."/>
            <person name="DeBoy R.T."/>
            <person name="Dodson R.J."/>
            <person name="Durkin A.S."/>
            <person name="Madupu R."/>
            <person name="Nelson W.C."/>
            <person name="Sullivan S.A."/>
            <person name="Rosovitz M.J."/>
            <person name="Haft D.H."/>
            <person name="Selengut J."/>
            <person name="Ward N."/>
        </authorList>
    </citation>
    <scope>NUCLEOTIDE SEQUENCE [LARGE SCALE GENOMIC DNA]</scope>
    <source>
        <strain>ATCC 700808 / DSM 15171 / DSS-3</strain>
    </source>
</reference>
<reference key="2">
    <citation type="journal article" date="2014" name="Stand. Genomic Sci.">
        <title>An updated genome annotation for the model marine bacterium Ruegeria pomeroyi DSS-3.</title>
        <authorList>
            <person name="Rivers A.R."/>
            <person name="Smith C.B."/>
            <person name="Moran M.A."/>
        </authorList>
    </citation>
    <scope>GENOME REANNOTATION</scope>
    <source>
        <strain>ATCC 700808 / DSM 15171 / DSS-3</strain>
    </source>
</reference>
<dbReference type="EC" id="6.3.3.1" evidence="1"/>
<dbReference type="EMBL" id="CP000031">
    <property type="protein sequence ID" value="AAV95437.1"/>
    <property type="molecule type" value="Genomic_DNA"/>
</dbReference>
<dbReference type="RefSeq" id="WP_011047892.1">
    <property type="nucleotide sequence ID" value="NC_003911.12"/>
</dbReference>
<dbReference type="SMR" id="Q5LRF9"/>
<dbReference type="STRING" id="246200.SPO2169"/>
<dbReference type="PaxDb" id="246200-SPO2169"/>
<dbReference type="KEGG" id="sil:SPO2169"/>
<dbReference type="eggNOG" id="COG0150">
    <property type="taxonomic scope" value="Bacteria"/>
</dbReference>
<dbReference type="HOGENOM" id="CLU_047116_0_0_5"/>
<dbReference type="OrthoDB" id="9777881at2"/>
<dbReference type="UniPathway" id="UPA00074">
    <property type="reaction ID" value="UER00129"/>
</dbReference>
<dbReference type="Proteomes" id="UP000001023">
    <property type="component" value="Chromosome"/>
</dbReference>
<dbReference type="GO" id="GO:0005829">
    <property type="term" value="C:cytosol"/>
    <property type="evidence" value="ECO:0007669"/>
    <property type="project" value="TreeGrafter"/>
</dbReference>
<dbReference type="GO" id="GO:0005524">
    <property type="term" value="F:ATP binding"/>
    <property type="evidence" value="ECO:0007669"/>
    <property type="project" value="UniProtKB-KW"/>
</dbReference>
<dbReference type="GO" id="GO:0004637">
    <property type="term" value="F:phosphoribosylamine-glycine ligase activity"/>
    <property type="evidence" value="ECO:0007669"/>
    <property type="project" value="TreeGrafter"/>
</dbReference>
<dbReference type="GO" id="GO:0004641">
    <property type="term" value="F:phosphoribosylformylglycinamidine cyclo-ligase activity"/>
    <property type="evidence" value="ECO:0007669"/>
    <property type="project" value="UniProtKB-UniRule"/>
</dbReference>
<dbReference type="GO" id="GO:0006189">
    <property type="term" value="P:'de novo' IMP biosynthetic process"/>
    <property type="evidence" value="ECO:0007669"/>
    <property type="project" value="UniProtKB-UniRule"/>
</dbReference>
<dbReference type="GO" id="GO:0046084">
    <property type="term" value="P:adenine biosynthetic process"/>
    <property type="evidence" value="ECO:0007669"/>
    <property type="project" value="TreeGrafter"/>
</dbReference>
<dbReference type="CDD" id="cd02196">
    <property type="entry name" value="PurM"/>
    <property type="match status" value="1"/>
</dbReference>
<dbReference type="FunFam" id="3.30.1330.10:FF:000001">
    <property type="entry name" value="Phosphoribosylformylglycinamidine cyclo-ligase"/>
    <property type="match status" value="1"/>
</dbReference>
<dbReference type="FunFam" id="3.90.650.10:FF:000001">
    <property type="entry name" value="Phosphoribosylformylglycinamidine cyclo-ligase"/>
    <property type="match status" value="1"/>
</dbReference>
<dbReference type="Gene3D" id="3.90.650.10">
    <property type="entry name" value="PurM-like C-terminal domain"/>
    <property type="match status" value="1"/>
</dbReference>
<dbReference type="Gene3D" id="3.30.1330.10">
    <property type="entry name" value="PurM-like, N-terminal domain"/>
    <property type="match status" value="1"/>
</dbReference>
<dbReference type="HAMAP" id="MF_00741">
    <property type="entry name" value="AIRS"/>
    <property type="match status" value="1"/>
</dbReference>
<dbReference type="InterPro" id="IPR010918">
    <property type="entry name" value="PurM-like_C_dom"/>
</dbReference>
<dbReference type="InterPro" id="IPR036676">
    <property type="entry name" value="PurM-like_C_sf"/>
</dbReference>
<dbReference type="InterPro" id="IPR016188">
    <property type="entry name" value="PurM-like_N"/>
</dbReference>
<dbReference type="InterPro" id="IPR036921">
    <property type="entry name" value="PurM-like_N_sf"/>
</dbReference>
<dbReference type="InterPro" id="IPR004733">
    <property type="entry name" value="PurM_cligase"/>
</dbReference>
<dbReference type="NCBIfam" id="TIGR00878">
    <property type="entry name" value="purM"/>
    <property type="match status" value="1"/>
</dbReference>
<dbReference type="PANTHER" id="PTHR10520:SF12">
    <property type="entry name" value="TRIFUNCTIONAL PURINE BIOSYNTHETIC PROTEIN ADENOSINE-3"/>
    <property type="match status" value="1"/>
</dbReference>
<dbReference type="PANTHER" id="PTHR10520">
    <property type="entry name" value="TRIFUNCTIONAL PURINE BIOSYNTHETIC PROTEIN ADENOSINE-3-RELATED"/>
    <property type="match status" value="1"/>
</dbReference>
<dbReference type="Pfam" id="PF00586">
    <property type="entry name" value="AIRS"/>
    <property type="match status" value="1"/>
</dbReference>
<dbReference type="Pfam" id="PF02769">
    <property type="entry name" value="AIRS_C"/>
    <property type="match status" value="1"/>
</dbReference>
<dbReference type="SUPFAM" id="SSF56042">
    <property type="entry name" value="PurM C-terminal domain-like"/>
    <property type="match status" value="1"/>
</dbReference>
<dbReference type="SUPFAM" id="SSF55326">
    <property type="entry name" value="PurM N-terminal domain-like"/>
    <property type="match status" value="1"/>
</dbReference>